<sequence>MTFKHIVRIADTDLDGNKSLMFALTGIKGIGLRAARCIVNELGVDGRAKLGELDDETIEKVKKFVEEEIESLPSWLLNRRKDPYSGQDLHLLSKDVDFARMLDIERLIKMKAYRGVRHARGKKVRGQRTRSTGRKGRTVGVVRRKR</sequence>
<reference key="1">
    <citation type="journal article" date="1997" name="Nature">
        <title>The complete genome sequence of the hyperthermophilic, sulphate-reducing archaeon Archaeoglobus fulgidus.</title>
        <authorList>
            <person name="Klenk H.-P."/>
            <person name="Clayton R.A."/>
            <person name="Tomb J.-F."/>
            <person name="White O."/>
            <person name="Nelson K.E."/>
            <person name="Ketchum K.A."/>
            <person name="Dodson R.J."/>
            <person name="Gwinn M.L."/>
            <person name="Hickey E.K."/>
            <person name="Peterson J.D."/>
            <person name="Richardson D.L."/>
            <person name="Kerlavage A.R."/>
            <person name="Graham D.E."/>
            <person name="Kyrpides N.C."/>
            <person name="Fleischmann R.D."/>
            <person name="Quackenbush J."/>
            <person name="Lee N.H."/>
            <person name="Sutton G.G."/>
            <person name="Gill S.R."/>
            <person name="Kirkness E.F."/>
            <person name="Dougherty B.A."/>
            <person name="McKenney K."/>
            <person name="Adams M.D."/>
            <person name="Loftus B.J."/>
            <person name="Peterson S.N."/>
            <person name="Reich C.I."/>
            <person name="McNeil L.K."/>
            <person name="Badger J.H."/>
            <person name="Glodek A."/>
            <person name="Zhou L."/>
            <person name="Overbeek R."/>
            <person name="Gocayne J.D."/>
            <person name="Weidman J.F."/>
            <person name="McDonald L.A."/>
            <person name="Utterback T.R."/>
            <person name="Cotton M.D."/>
            <person name="Spriggs T."/>
            <person name="Artiach P."/>
            <person name="Kaine B.P."/>
            <person name="Sykes S.M."/>
            <person name="Sadow P.W."/>
            <person name="D'Andrea K.P."/>
            <person name="Bowman C."/>
            <person name="Fujii C."/>
            <person name="Garland S.A."/>
            <person name="Mason T.M."/>
            <person name="Olsen G.J."/>
            <person name="Fraser C.M."/>
            <person name="Smith H.O."/>
            <person name="Woese C.R."/>
            <person name="Venter J.C."/>
        </authorList>
    </citation>
    <scope>NUCLEOTIDE SEQUENCE [LARGE SCALE GENOMIC DNA]</scope>
    <source>
        <strain>ATCC 49558 / DSM 4304 / JCM 9628 / NBRC 100126 / VC-16</strain>
    </source>
</reference>
<name>RS13_ARCFU</name>
<proteinExistence type="inferred from homology"/>
<accession>O27999</accession>
<protein>
    <recommendedName>
        <fullName evidence="1">Small ribosomal subunit protein uS13</fullName>
    </recommendedName>
    <alternativeName>
        <fullName evidence="3">30S ribosomal protein S13</fullName>
    </alternativeName>
</protein>
<comment type="function">
    <text evidence="1">Located at the top of the head of the 30S subunit, it contacts several helices of the 16S rRNA. In the 70S ribosome it contacts the 23S rRNA (bridge B1a) and protein L5 of the 50S subunit (bridge B1b), connecting the 2 subunits; these bridges are implicated in subunit movement.</text>
</comment>
<comment type="subunit">
    <text evidence="1">Part of the 30S ribosomal subunit. Forms a loose heterodimer with protein S19. Forms two bridges to the 50S subunit in the 70S ribosome.</text>
</comment>
<comment type="similarity">
    <text evidence="1">Belongs to the universal ribosomal protein uS13 family.</text>
</comment>
<organism>
    <name type="scientific">Archaeoglobus fulgidus (strain ATCC 49558 / DSM 4304 / JCM 9628 / NBRC 100126 / VC-16)</name>
    <dbReference type="NCBI Taxonomy" id="224325"/>
    <lineage>
        <taxon>Archaea</taxon>
        <taxon>Methanobacteriati</taxon>
        <taxon>Methanobacteriota</taxon>
        <taxon>Archaeoglobi</taxon>
        <taxon>Archaeoglobales</taxon>
        <taxon>Archaeoglobaceae</taxon>
        <taxon>Archaeoglobus</taxon>
    </lineage>
</organism>
<gene>
    <name evidence="1" type="primary">rps13</name>
    <name type="ordered locus">AF_2285</name>
</gene>
<keyword id="KW-1185">Reference proteome</keyword>
<keyword id="KW-0687">Ribonucleoprotein</keyword>
<keyword id="KW-0689">Ribosomal protein</keyword>
<keyword id="KW-0694">RNA-binding</keyword>
<keyword id="KW-0699">rRNA-binding</keyword>
<evidence type="ECO:0000255" key="1">
    <source>
        <dbReference type="HAMAP-Rule" id="MF_01315"/>
    </source>
</evidence>
<evidence type="ECO:0000256" key="2">
    <source>
        <dbReference type="SAM" id="MobiDB-lite"/>
    </source>
</evidence>
<evidence type="ECO:0000305" key="3"/>
<feature type="chain" id="PRO_0000132177" description="Small ribosomal subunit protein uS13">
    <location>
        <begin position="1"/>
        <end position="146"/>
    </location>
</feature>
<feature type="region of interest" description="Disordered" evidence="2">
    <location>
        <begin position="119"/>
        <end position="146"/>
    </location>
</feature>
<dbReference type="EMBL" id="AE000782">
    <property type="protein sequence ID" value="AAB88972.1"/>
    <property type="molecule type" value="Genomic_DNA"/>
</dbReference>
<dbReference type="PIR" id="E69535">
    <property type="entry name" value="E69535"/>
</dbReference>
<dbReference type="RefSeq" id="WP_010879774.1">
    <property type="nucleotide sequence ID" value="NC_000917.1"/>
</dbReference>
<dbReference type="SMR" id="O27999"/>
<dbReference type="STRING" id="224325.AF_2285"/>
<dbReference type="PaxDb" id="224325-AF_2285"/>
<dbReference type="EnsemblBacteria" id="AAB88972">
    <property type="protein sequence ID" value="AAB88972"/>
    <property type="gene ID" value="AF_2285"/>
</dbReference>
<dbReference type="KEGG" id="afu:AF_2285"/>
<dbReference type="eggNOG" id="arCOG01722">
    <property type="taxonomic scope" value="Archaea"/>
</dbReference>
<dbReference type="HOGENOM" id="CLU_103849_0_0_2"/>
<dbReference type="OrthoDB" id="372127at2157"/>
<dbReference type="PhylomeDB" id="O27999"/>
<dbReference type="Proteomes" id="UP000002199">
    <property type="component" value="Chromosome"/>
</dbReference>
<dbReference type="GO" id="GO:0005829">
    <property type="term" value="C:cytosol"/>
    <property type="evidence" value="ECO:0007669"/>
    <property type="project" value="TreeGrafter"/>
</dbReference>
<dbReference type="GO" id="GO:0015935">
    <property type="term" value="C:small ribosomal subunit"/>
    <property type="evidence" value="ECO:0007669"/>
    <property type="project" value="TreeGrafter"/>
</dbReference>
<dbReference type="GO" id="GO:0019843">
    <property type="term" value="F:rRNA binding"/>
    <property type="evidence" value="ECO:0007669"/>
    <property type="project" value="UniProtKB-UniRule"/>
</dbReference>
<dbReference type="GO" id="GO:0003735">
    <property type="term" value="F:structural constituent of ribosome"/>
    <property type="evidence" value="ECO:0007669"/>
    <property type="project" value="InterPro"/>
</dbReference>
<dbReference type="GO" id="GO:0006412">
    <property type="term" value="P:translation"/>
    <property type="evidence" value="ECO:0007669"/>
    <property type="project" value="UniProtKB-UniRule"/>
</dbReference>
<dbReference type="Gene3D" id="1.10.8.50">
    <property type="match status" value="1"/>
</dbReference>
<dbReference type="Gene3D" id="4.10.910.10">
    <property type="entry name" value="30s ribosomal protein s13, domain 2"/>
    <property type="match status" value="1"/>
</dbReference>
<dbReference type="HAMAP" id="MF_01315">
    <property type="entry name" value="Ribosomal_uS13"/>
    <property type="match status" value="1"/>
</dbReference>
<dbReference type="InterPro" id="IPR027437">
    <property type="entry name" value="Rbsml_uS13_C"/>
</dbReference>
<dbReference type="InterPro" id="IPR001892">
    <property type="entry name" value="Ribosomal_uS13"/>
</dbReference>
<dbReference type="InterPro" id="IPR010979">
    <property type="entry name" value="Ribosomal_uS13-like_H2TH"/>
</dbReference>
<dbReference type="InterPro" id="IPR019977">
    <property type="entry name" value="Ribosomal_uS13_archaeal"/>
</dbReference>
<dbReference type="InterPro" id="IPR018269">
    <property type="entry name" value="Ribosomal_uS13_CS"/>
</dbReference>
<dbReference type="NCBIfam" id="NF003140">
    <property type="entry name" value="PRK04053.1"/>
    <property type="match status" value="1"/>
</dbReference>
<dbReference type="NCBIfam" id="TIGR03629">
    <property type="entry name" value="uS13_arch"/>
    <property type="match status" value="1"/>
</dbReference>
<dbReference type="PANTHER" id="PTHR10871">
    <property type="entry name" value="30S RIBOSOMAL PROTEIN S13/40S RIBOSOMAL PROTEIN S18"/>
    <property type="match status" value="1"/>
</dbReference>
<dbReference type="PANTHER" id="PTHR10871:SF3">
    <property type="entry name" value="SMALL RIBOSOMAL SUBUNIT PROTEIN US13"/>
    <property type="match status" value="1"/>
</dbReference>
<dbReference type="Pfam" id="PF00416">
    <property type="entry name" value="Ribosomal_S13"/>
    <property type="match status" value="1"/>
</dbReference>
<dbReference type="PIRSF" id="PIRSF002134">
    <property type="entry name" value="Ribosomal_S13"/>
    <property type="match status" value="1"/>
</dbReference>
<dbReference type="SUPFAM" id="SSF46946">
    <property type="entry name" value="S13-like H2TH domain"/>
    <property type="match status" value="1"/>
</dbReference>
<dbReference type="PROSITE" id="PS00646">
    <property type="entry name" value="RIBOSOMAL_S13_1"/>
    <property type="match status" value="1"/>
</dbReference>
<dbReference type="PROSITE" id="PS50159">
    <property type="entry name" value="RIBOSOMAL_S13_2"/>
    <property type="match status" value="1"/>
</dbReference>